<comment type="induction">
    <text evidence="2">By cadmium.</text>
</comment>
<comment type="similarity">
    <text evidence="3">To B.subtilis YqcK.</text>
</comment>
<dbReference type="EMBL" id="AL123456">
    <property type="protein sequence ID" value="CCP45439.1"/>
    <property type="molecule type" value="Genomic_DNA"/>
</dbReference>
<dbReference type="PIR" id="E70964">
    <property type="entry name" value="E70964"/>
</dbReference>
<dbReference type="RefSeq" id="NP_217157.1">
    <property type="nucleotide sequence ID" value="NC_000962.3"/>
</dbReference>
<dbReference type="RefSeq" id="WP_003413675.1">
    <property type="nucleotide sequence ID" value="NZ_NVQJ01000077.1"/>
</dbReference>
<dbReference type="SMR" id="P9WIR5"/>
<dbReference type="FunCoup" id="P9WIR5">
    <property type="interactions" value="1"/>
</dbReference>
<dbReference type="STRING" id="83332.Rv2641"/>
<dbReference type="PaxDb" id="83332-Rv2641"/>
<dbReference type="GeneID" id="45426646"/>
<dbReference type="GeneID" id="888629"/>
<dbReference type="KEGG" id="mtu:Rv2641"/>
<dbReference type="KEGG" id="mtv:RVBD_2641"/>
<dbReference type="TubercuList" id="Rv2641"/>
<dbReference type="eggNOG" id="COG0346">
    <property type="taxonomic scope" value="Bacteria"/>
</dbReference>
<dbReference type="InParanoid" id="P9WIR5"/>
<dbReference type="OrthoDB" id="9789608at2"/>
<dbReference type="PhylomeDB" id="P9WIR5"/>
<dbReference type="Proteomes" id="UP000001584">
    <property type="component" value="Chromosome"/>
</dbReference>
<dbReference type="GO" id="GO:0046686">
    <property type="term" value="P:response to cadmium ion"/>
    <property type="evidence" value="ECO:0000270"/>
    <property type="project" value="MTBBASE"/>
</dbReference>
<dbReference type="CDD" id="cd07254">
    <property type="entry name" value="VOC_like"/>
    <property type="match status" value="1"/>
</dbReference>
<dbReference type="FunFam" id="3.10.180.10:FF:000032">
    <property type="entry name" value="Cadmium inducible protein CadI"/>
    <property type="match status" value="1"/>
</dbReference>
<dbReference type="Gene3D" id="3.10.180.10">
    <property type="entry name" value="2,3-Dihydroxybiphenyl 1,2-Dioxygenase, domain 1"/>
    <property type="match status" value="1"/>
</dbReference>
<dbReference type="InterPro" id="IPR052393">
    <property type="entry name" value="Cadmium-induced_rsp"/>
</dbReference>
<dbReference type="InterPro" id="IPR029068">
    <property type="entry name" value="Glyas_Bleomycin-R_OHBP_Dase"/>
</dbReference>
<dbReference type="InterPro" id="IPR004360">
    <property type="entry name" value="Glyas_Fos-R_dOase_dom"/>
</dbReference>
<dbReference type="InterPro" id="IPR037523">
    <property type="entry name" value="VOC"/>
</dbReference>
<dbReference type="InterPro" id="IPR049789">
    <property type="entry name" value="YqcK/CadI-like"/>
</dbReference>
<dbReference type="NCBIfam" id="NF041414">
    <property type="entry name" value="ArsI_CadI_VOC"/>
    <property type="match status" value="1"/>
</dbReference>
<dbReference type="PANTHER" id="PTHR41294">
    <property type="entry name" value="CADMIUM-INDUCED PROTEIN CADI"/>
    <property type="match status" value="1"/>
</dbReference>
<dbReference type="PANTHER" id="PTHR41294:SF1">
    <property type="entry name" value="CADMIUM-INDUCED PROTEIN CADI"/>
    <property type="match status" value="1"/>
</dbReference>
<dbReference type="Pfam" id="PF00903">
    <property type="entry name" value="Glyoxalase"/>
    <property type="match status" value="1"/>
</dbReference>
<dbReference type="SUPFAM" id="SSF54593">
    <property type="entry name" value="Glyoxalase/Bleomycin resistance protein/Dihydroxybiphenyl dioxygenase"/>
    <property type="match status" value="1"/>
</dbReference>
<dbReference type="PROSITE" id="PS51819">
    <property type="entry name" value="VOC"/>
    <property type="match status" value="1"/>
</dbReference>
<accession>P9WIR5</accession>
<accession>L0TBV1</accession>
<accession>P0A5N6</accession>
<accession>P71940</accession>
<gene>
    <name type="primary">cadI</name>
    <name type="ordered locus">Rv2641</name>
    <name type="ORF">MTCY441.11</name>
</gene>
<proteinExistence type="evidence at protein level"/>
<name>CADI_MYCTU</name>
<reference key="1">
    <citation type="journal article" date="1998" name="Nature">
        <title>Deciphering the biology of Mycobacterium tuberculosis from the complete genome sequence.</title>
        <authorList>
            <person name="Cole S.T."/>
            <person name="Brosch R."/>
            <person name="Parkhill J."/>
            <person name="Garnier T."/>
            <person name="Churcher C.M."/>
            <person name="Harris D.E."/>
            <person name="Gordon S.V."/>
            <person name="Eiglmeier K."/>
            <person name="Gas S."/>
            <person name="Barry C.E. III"/>
            <person name="Tekaia F."/>
            <person name="Badcock K."/>
            <person name="Basham D."/>
            <person name="Brown D."/>
            <person name="Chillingworth T."/>
            <person name="Connor R."/>
            <person name="Davies R.M."/>
            <person name="Devlin K."/>
            <person name="Feltwell T."/>
            <person name="Gentles S."/>
            <person name="Hamlin N."/>
            <person name="Holroyd S."/>
            <person name="Hornsby T."/>
            <person name="Jagels K."/>
            <person name="Krogh A."/>
            <person name="McLean J."/>
            <person name="Moule S."/>
            <person name="Murphy L.D."/>
            <person name="Oliver S."/>
            <person name="Osborne J."/>
            <person name="Quail M.A."/>
            <person name="Rajandream M.A."/>
            <person name="Rogers J."/>
            <person name="Rutter S."/>
            <person name="Seeger K."/>
            <person name="Skelton S."/>
            <person name="Squares S."/>
            <person name="Squares R."/>
            <person name="Sulston J.E."/>
            <person name="Taylor K."/>
            <person name="Whitehead S."/>
            <person name="Barrell B.G."/>
        </authorList>
    </citation>
    <scope>NUCLEOTIDE SEQUENCE [LARGE SCALE GENOMIC DNA]</scope>
    <source>
        <strain>ATCC 25618 / H37Rv</strain>
    </source>
</reference>
<reference key="2">
    <citation type="journal article" date="2001" name="FEMS Microbiol. Lett.">
        <title>Identification of a cadmium-induced gene in Mycobacterium bovis and Mycobacterium tuberculosis.</title>
        <authorList>
            <person name="Hotter G.S."/>
            <person name="Wilson T."/>
            <person name="Collins D.M."/>
        </authorList>
    </citation>
    <scope>PROTEIN SEQUENCE OF 2-21</scope>
    <scope>GENE NAME</scope>
    <scope>INDUCTION</scope>
    <source>
        <strain>ATCC 25618 / H37Rv</strain>
    </source>
</reference>
<reference key="3">
    <citation type="journal article" date="2011" name="Mol. Cell. Proteomics">
        <title>Proteogenomic analysis of Mycobacterium tuberculosis by high resolution mass spectrometry.</title>
        <authorList>
            <person name="Kelkar D.S."/>
            <person name="Kumar D."/>
            <person name="Kumar P."/>
            <person name="Balakrishnan L."/>
            <person name="Muthusamy B."/>
            <person name="Yadav A.K."/>
            <person name="Shrivastava P."/>
            <person name="Marimuthu A."/>
            <person name="Anand S."/>
            <person name="Sundaram H."/>
            <person name="Kingsbury R."/>
            <person name="Harsha H.C."/>
            <person name="Nair B."/>
            <person name="Prasad T.S."/>
            <person name="Chauhan D.S."/>
            <person name="Katoch K."/>
            <person name="Katoch V.M."/>
            <person name="Kumar P."/>
            <person name="Chaerkady R."/>
            <person name="Ramachandran S."/>
            <person name="Dash D."/>
            <person name="Pandey A."/>
        </authorList>
    </citation>
    <scope>IDENTIFICATION BY MASS SPECTROMETRY [LARGE SCALE ANALYSIS]</scope>
    <source>
        <strain>ATCC 25618 / H37Rv</strain>
    </source>
</reference>
<evidence type="ECO:0000255" key="1">
    <source>
        <dbReference type="PROSITE-ProRule" id="PRU01163"/>
    </source>
</evidence>
<evidence type="ECO:0000269" key="2">
    <source>
    </source>
</evidence>
<evidence type="ECO:0000305" key="3"/>
<keyword id="KW-0903">Direct protein sequencing</keyword>
<keyword id="KW-1185">Reference proteome</keyword>
<protein>
    <recommendedName>
        <fullName>Cadmium-induced protein CadI</fullName>
    </recommendedName>
</protein>
<sequence length="152" mass="16031">MSRVQLALNVDDLEAAITFYSRLFNAEPAKRKPGYANFAIADPPLKLVLLENPGTGGTLNHLGVEVGSSNTVHAEIARLTEAGLVTEKEIGTTCCFATQDKVWVTGPGGERWEVYTVLADSETFGSGPRHNDTSDGEASMCCDGQVAVGASG</sequence>
<organism>
    <name type="scientific">Mycobacterium tuberculosis (strain ATCC 25618 / H37Rv)</name>
    <dbReference type="NCBI Taxonomy" id="83332"/>
    <lineage>
        <taxon>Bacteria</taxon>
        <taxon>Bacillati</taxon>
        <taxon>Actinomycetota</taxon>
        <taxon>Actinomycetes</taxon>
        <taxon>Mycobacteriales</taxon>
        <taxon>Mycobacteriaceae</taxon>
        <taxon>Mycobacterium</taxon>
        <taxon>Mycobacterium tuberculosis complex</taxon>
    </lineage>
</organism>
<feature type="initiator methionine" description="Removed" evidence="2">
    <location>
        <position position="1"/>
    </location>
</feature>
<feature type="chain" id="PRO_0000089275" description="Cadmium-induced protein CadI">
    <location>
        <begin position="2"/>
        <end position="152"/>
    </location>
</feature>
<feature type="domain" description="VOC" evidence="1">
    <location>
        <begin position="2"/>
        <end position="117"/>
    </location>
</feature>